<sequence>AVPDVAFNAYG</sequence>
<dbReference type="GO" id="GO:0005576">
    <property type="term" value="C:extracellular region"/>
    <property type="evidence" value="ECO:0000314"/>
    <property type="project" value="UniProtKB"/>
</dbReference>
<dbReference type="GO" id="GO:0050832">
    <property type="term" value="P:defense response to fungus"/>
    <property type="evidence" value="ECO:0000315"/>
    <property type="project" value="UniProtKB"/>
</dbReference>
<dbReference type="GO" id="GO:0050829">
    <property type="term" value="P:defense response to Gram-negative bacterium"/>
    <property type="evidence" value="ECO:0000315"/>
    <property type="project" value="UniProtKB"/>
</dbReference>
<dbReference type="GO" id="GO:0050830">
    <property type="term" value="P:defense response to Gram-positive bacterium"/>
    <property type="evidence" value="ECO:0000315"/>
    <property type="project" value="UniProtKB"/>
</dbReference>
<dbReference type="GO" id="GO:0031640">
    <property type="term" value="P:killing of cells of another organism"/>
    <property type="evidence" value="ECO:0007669"/>
    <property type="project" value="UniProtKB-KW"/>
</dbReference>
<proteinExistence type="evidence at protein level"/>
<accession>P86316</accession>
<feature type="chain" id="PRO_0000379969" description="Big defensin">
    <location>
        <begin position="1"/>
        <end position="11" status="greater than"/>
    </location>
</feature>
<feature type="non-terminal residue" evidence="3">
    <location>
        <position position="11"/>
    </location>
</feature>
<reference evidence="3" key="1">
    <citation type="journal article" date="2003" name="Sheng Wu Hua Xue Yu Sheng Wu Wu Li Xue Bao">
        <title>Purification of a big defensin from Ruditapes philippinesis and its antibacterial activity.</title>
        <authorList>
            <person name="Wei Y.-X."/>
            <person name="Guo D.-S."/>
            <person name="Li R.-G."/>
            <person name="Chen H.-W."/>
            <person name="Chen P.-X."/>
        </authorList>
    </citation>
    <scope>PROTEIN SEQUENCE</scope>
    <scope>FUNCTION</scope>
    <scope>SUBCELLULAR LOCATION</scope>
</reference>
<name>BDEF_RUDPH</name>
<protein>
    <recommendedName>
        <fullName evidence="2">Big defensin</fullName>
        <shortName evidence="2">RPD-1</shortName>
    </recommendedName>
</protein>
<keyword id="KW-0044">Antibiotic</keyword>
<keyword id="KW-0929">Antimicrobial</keyword>
<keyword id="KW-0211">Defensin</keyword>
<keyword id="KW-0903">Direct protein sequencing</keyword>
<keyword id="KW-0295">Fungicide</keyword>
<keyword id="KW-0964">Secreted</keyword>
<comment type="function">
    <text evidence="1">Significantly inhibits the growth of Gram-negative and Gram-positive bacteria and fungi in vitro. Has antibacterial activity against S.aureus (MIC=9.6 mg/L), B.subtilis (MIC=76.8 mg/L), M.tetragenus (MIC=38.4 mg/L), E.coli (MIC=76.8 mg/L), V.parahaemolyticus (MIC=19.2 mg/L), and V.anguillarum (MIC=2.1 mg/L).</text>
</comment>
<comment type="subcellular location">
    <subcellularLocation>
        <location evidence="1">Secreted</location>
    </subcellularLocation>
</comment>
<comment type="similarity">
    <text evidence="3">Belongs to the big defensin family.</text>
</comment>
<organism>
    <name type="scientific">Ruditapes philippinarum</name>
    <name type="common">Japanese carpet shell</name>
    <name type="synonym">Venerupis philippinarum</name>
    <dbReference type="NCBI Taxonomy" id="129788"/>
    <lineage>
        <taxon>Eukaryota</taxon>
        <taxon>Metazoa</taxon>
        <taxon>Spiralia</taxon>
        <taxon>Lophotrochozoa</taxon>
        <taxon>Mollusca</taxon>
        <taxon>Bivalvia</taxon>
        <taxon>Autobranchia</taxon>
        <taxon>Heteroconchia</taxon>
        <taxon>Euheterodonta</taxon>
        <taxon>Imparidentia</taxon>
        <taxon>Neoheterodontei</taxon>
        <taxon>Venerida</taxon>
        <taxon>Veneroidea</taxon>
        <taxon>Veneridae</taxon>
        <taxon>Ruditapes</taxon>
    </lineage>
</organism>
<evidence type="ECO:0000269" key="1">
    <source>
    </source>
</evidence>
<evidence type="ECO:0000303" key="2">
    <source>
    </source>
</evidence>
<evidence type="ECO:0000305" key="3"/>